<name>RS16_CHLCV</name>
<protein>
    <recommendedName>
        <fullName evidence="1">Small ribosomal subunit protein bS16</fullName>
    </recommendedName>
    <alternativeName>
        <fullName evidence="2">30S ribosomal protein S16</fullName>
    </alternativeName>
</protein>
<reference key="1">
    <citation type="journal article" date="2003" name="Nucleic Acids Res.">
        <title>Genome sequence of Chlamydophila caviae (Chlamydia psittaci GPIC): examining the role of niche-specific genes in the evolution of the Chlamydiaceae.</title>
        <authorList>
            <person name="Read T.D."/>
            <person name="Myers G.S.A."/>
            <person name="Brunham R.C."/>
            <person name="Nelson W.C."/>
            <person name="Paulsen I.T."/>
            <person name="Heidelberg J.F."/>
            <person name="Holtzapple E.K."/>
            <person name="Khouri H.M."/>
            <person name="Federova N.B."/>
            <person name="Carty H.A."/>
            <person name="Umayam L.A."/>
            <person name="Haft D.H."/>
            <person name="Peterson J.D."/>
            <person name="Beanan M.J."/>
            <person name="White O."/>
            <person name="Salzberg S.L."/>
            <person name="Hsia R.-C."/>
            <person name="McClarty G."/>
            <person name="Rank R.G."/>
            <person name="Bavoil P.M."/>
            <person name="Fraser C.M."/>
        </authorList>
    </citation>
    <scope>NUCLEOTIDE SEQUENCE [LARGE SCALE GENOMIC DNA]</scope>
    <source>
        <strain>ATCC VR-813 / DSM 19441 / 03DC25 / GPIC</strain>
    </source>
</reference>
<evidence type="ECO:0000255" key="1">
    <source>
        <dbReference type="HAMAP-Rule" id="MF_00385"/>
    </source>
</evidence>
<evidence type="ECO:0000305" key="2"/>
<comment type="similarity">
    <text evidence="1">Belongs to the bacterial ribosomal protein bS16 family.</text>
</comment>
<sequence>MALKIRLRQQGRRNHVVYRLVLADVESPRDGRYIELLGWYDPHSAVNYQLKGDRIFHWLSQGAELTEKAAVLIKQGAPGVYSELMAKQAARKAAVCQKRRAYRQRRSLKRAEAAKAAAK</sequence>
<proteinExistence type="inferred from homology"/>
<dbReference type="EMBL" id="AE015925">
    <property type="protein sequence ID" value="AAP05399.1"/>
    <property type="molecule type" value="Genomic_DNA"/>
</dbReference>
<dbReference type="RefSeq" id="WP_011006614.1">
    <property type="nucleotide sequence ID" value="NC_003361.3"/>
</dbReference>
<dbReference type="SMR" id="Q822M5"/>
<dbReference type="STRING" id="227941.CCA_00657"/>
<dbReference type="KEGG" id="cca:CCA_00657"/>
<dbReference type="eggNOG" id="COG0228">
    <property type="taxonomic scope" value="Bacteria"/>
</dbReference>
<dbReference type="HOGENOM" id="CLU_100590_3_1_0"/>
<dbReference type="OrthoDB" id="9807878at2"/>
<dbReference type="Proteomes" id="UP000002193">
    <property type="component" value="Chromosome"/>
</dbReference>
<dbReference type="GO" id="GO:0005737">
    <property type="term" value="C:cytoplasm"/>
    <property type="evidence" value="ECO:0007669"/>
    <property type="project" value="UniProtKB-ARBA"/>
</dbReference>
<dbReference type="GO" id="GO:0015935">
    <property type="term" value="C:small ribosomal subunit"/>
    <property type="evidence" value="ECO:0007669"/>
    <property type="project" value="TreeGrafter"/>
</dbReference>
<dbReference type="GO" id="GO:0003735">
    <property type="term" value="F:structural constituent of ribosome"/>
    <property type="evidence" value="ECO:0007669"/>
    <property type="project" value="InterPro"/>
</dbReference>
<dbReference type="GO" id="GO:0006412">
    <property type="term" value="P:translation"/>
    <property type="evidence" value="ECO:0007669"/>
    <property type="project" value="UniProtKB-UniRule"/>
</dbReference>
<dbReference type="Gene3D" id="3.30.1320.10">
    <property type="match status" value="1"/>
</dbReference>
<dbReference type="HAMAP" id="MF_00385">
    <property type="entry name" value="Ribosomal_bS16"/>
    <property type="match status" value="1"/>
</dbReference>
<dbReference type="InterPro" id="IPR000307">
    <property type="entry name" value="Ribosomal_bS16"/>
</dbReference>
<dbReference type="InterPro" id="IPR023803">
    <property type="entry name" value="Ribosomal_bS16_dom_sf"/>
</dbReference>
<dbReference type="NCBIfam" id="NF011095">
    <property type="entry name" value="PRK14522.1"/>
    <property type="match status" value="1"/>
</dbReference>
<dbReference type="NCBIfam" id="TIGR00002">
    <property type="entry name" value="S16"/>
    <property type="match status" value="1"/>
</dbReference>
<dbReference type="PANTHER" id="PTHR12919">
    <property type="entry name" value="30S RIBOSOMAL PROTEIN S16"/>
    <property type="match status" value="1"/>
</dbReference>
<dbReference type="PANTHER" id="PTHR12919:SF20">
    <property type="entry name" value="SMALL RIBOSOMAL SUBUNIT PROTEIN BS16M"/>
    <property type="match status" value="1"/>
</dbReference>
<dbReference type="Pfam" id="PF00886">
    <property type="entry name" value="Ribosomal_S16"/>
    <property type="match status" value="1"/>
</dbReference>
<dbReference type="SUPFAM" id="SSF54565">
    <property type="entry name" value="Ribosomal protein S16"/>
    <property type="match status" value="1"/>
</dbReference>
<keyword id="KW-0687">Ribonucleoprotein</keyword>
<keyword id="KW-0689">Ribosomal protein</keyword>
<organism>
    <name type="scientific">Chlamydia caviae (strain ATCC VR-813 / DSM 19441 / 03DC25 / GPIC)</name>
    <name type="common">Chlamydophila caviae</name>
    <dbReference type="NCBI Taxonomy" id="227941"/>
    <lineage>
        <taxon>Bacteria</taxon>
        <taxon>Pseudomonadati</taxon>
        <taxon>Chlamydiota</taxon>
        <taxon>Chlamydiia</taxon>
        <taxon>Chlamydiales</taxon>
        <taxon>Chlamydiaceae</taxon>
        <taxon>Chlamydia/Chlamydophila group</taxon>
        <taxon>Chlamydia</taxon>
    </lineage>
</organism>
<feature type="chain" id="PRO_0000167170" description="Small ribosomal subunit protein bS16">
    <location>
        <begin position="1"/>
        <end position="119"/>
    </location>
</feature>
<gene>
    <name evidence="1" type="primary">rpsP</name>
    <name type="ordered locus">CCA_00657</name>
</gene>
<accession>Q822M5</accession>